<keyword id="KW-0539">Nucleus</keyword>
<keyword id="KW-1185">Reference proteome</keyword>
<reference key="1">
    <citation type="journal article" date="2000" name="Nature">
        <title>Sequence and analysis of chromosome 3 of the plant Arabidopsis thaliana.</title>
        <authorList>
            <person name="Salanoubat M."/>
            <person name="Lemcke K."/>
            <person name="Rieger M."/>
            <person name="Ansorge W."/>
            <person name="Unseld M."/>
            <person name="Fartmann B."/>
            <person name="Valle G."/>
            <person name="Bloecker H."/>
            <person name="Perez-Alonso M."/>
            <person name="Obermaier B."/>
            <person name="Delseny M."/>
            <person name="Boutry M."/>
            <person name="Grivell L.A."/>
            <person name="Mache R."/>
            <person name="Puigdomenech P."/>
            <person name="De Simone V."/>
            <person name="Choisne N."/>
            <person name="Artiguenave F."/>
            <person name="Robert C."/>
            <person name="Brottier P."/>
            <person name="Wincker P."/>
            <person name="Cattolico L."/>
            <person name="Weissenbach J."/>
            <person name="Saurin W."/>
            <person name="Quetier F."/>
            <person name="Schaefer M."/>
            <person name="Mueller-Auer S."/>
            <person name="Gabel C."/>
            <person name="Fuchs M."/>
            <person name="Benes V."/>
            <person name="Wurmbach E."/>
            <person name="Drzonek H."/>
            <person name="Erfle H."/>
            <person name="Jordan N."/>
            <person name="Bangert S."/>
            <person name="Wiedelmann R."/>
            <person name="Kranz H."/>
            <person name="Voss H."/>
            <person name="Holland R."/>
            <person name="Brandt P."/>
            <person name="Nyakatura G."/>
            <person name="Vezzi A."/>
            <person name="D'Angelo M."/>
            <person name="Pallavicini A."/>
            <person name="Toppo S."/>
            <person name="Simionati B."/>
            <person name="Conrad A."/>
            <person name="Hornischer K."/>
            <person name="Kauer G."/>
            <person name="Loehnert T.-H."/>
            <person name="Nordsiek G."/>
            <person name="Reichelt J."/>
            <person name="Scharfe M."/>
            <person name="Schoen O."/>
            <person name="Bargues M."/>
            <person name="Terol J."/>
            <person name="Climent J."/>
            <person name="Navarro P."/>
            <person name="Collado C."/>
            <person name="Perez-Perez A."/>
            <person name="Ottenwaelder B."/>
            <person name="Duchemin D."/>
            <person name="Cooke R."/>
            <person name="Laudie M."/>
            <person name="Berger-Llauro C."/>
            <person name="Purnelle B."/>
            <person name="Masuy D."/>
            <person name="de Haan M."/>
            <person name="Maarse A.C."/>
            <person name="Alcaraz J.-P."/>
            <person name="Cottet A."/>
            <person name="Casacuberta E."/>
            <person name="Monfort A."/>
            <person name="Argiriou A."/>
            <person name="Flores M."/>
            <person name="Liguori R."/>
            <person name="Vitale D."/>
            <person name="Mannhaupt G."/>
            <person name="Haase D."/>
            <person name="Schoof H."/>
            <person name="Rudd S."/>
            <person name="Zaccaria P."/>
            <person name="Mewes H.-W."/>
            <person name="Mayer K.F.X."/>
            <person name="Kaul S."/>
            <person name="Town C.D."/>
            <person name="Koo H.L."/>
            <person name="Tallon L.J."/>
            <person name="Jenkins J."/>
            <person name="Rooney T."/>
            <person name="Rizzo M."/>
            <person name="Walts A."/>
            <person name="Utterback T."/>
            <person name="Fujii C.Y."/>
            <person name="Shea T.P."/>
            <person name="Creasy T.H."/>
            <person name="Haas B."/>
            <person name="Maiti R."/>
            <person name="Wu D."/>
            <person name="Peterson J."/>
            <person name="Van Aken S."/>
            <person name="Pai G."/>
            <person name="Militscher J."/>
            <person name="Sellers P."/>
            <person name="Gill J.E."/>
            <person name="Feldblyum T.V."/>
            <person name="Preuss D."/>
            <person name="Lin X."/>
            <person name="Nierman W.C."/>
            <person name="Salzberg S.L."/>
            <person name="White O."/>
            <person name="Venter J.C."/>
            <person name="Fraser C.M."/>
            <person name="Kaneko T."/>
            <person name="Nakamura Y."/>
            <person name="Sato S."/>
            <person name="Kato T."/>
            <person name="Asamizu E."/>
            <person name="Sasamoto S."/>
            <person name="Kimura T."/>
            <person name="Idesawa K."/>
            <person name="Kawashima K."/>
            <person name="Kishida Y."/>
            <person name="Kiyokawa C."/>
            <person name="Kohara M."/>
            <person name="Matsumoto M."/>
            <person name="Matsuno A."/>
            <person name="Muraki A."/>
            <person name="Nakayama S."/>
            <person name="Nakazaki N."/>
            <person name="Shinpo S."/>
            <person name="Takeuchi C."/>
            <person name="Wada T."/>
            <person name="Watanabe A."/>
            <person name="Yamada M."/>
            <person name="Yasuda M."/>
            <person name="Tabata S."/>
        </authorList>
    </citation>
    <scope>NUCLEOTIDE SEQUENCE [LARGE SCALE GENOMIC DNA]</scope>
    <source>
        <strain>cv. Columbia</strain>
    </source>
</reference>
<reference key="2">
    <citation type="journal article" date="2017" name="Plant J.">
        <title>Araport11: a complete reannotation of the Arabidopsis thaliana reference genome.</title>
        <authorList>
            <person name="Cheng C.Y."/>
            <person name="Krishnakumar V."/>
            <person name="Chan A.P."/>
            <person name="Thibaud-Nissen F."/>
            <person name="Schobel S."/>
            <person name="Town C.D."/>
        </authorList>
    </citation>
    <scope>GENOME REANNOTATION</scope>
    <source>
        <strain>cv. Columbia</strain>
    </source>
</reference>
<reference key="3">
    <citation type="journal article" date="2003" name="Science">
        <title>Empirical analysis of transcriptional activity in the Arabidopsis genome.</title>
        <authorList>
            <person name="Yamada K."/>
            <person name="Lim J."/>
            <person name="Dale J.M."/>
            <person name="Chen H."/>
            <person name="Shinn P."/>
            <person name="Palm C.J."/>
            <person name="Southwick A.M."/>
            <person name="Wu H.C."/>
            <person name="Kim C.J."/>
            <person name="Nguyen M."/>
            <person name="Pham P.K."/>
            <person name="Cheuk R.F."/>
            <person name="Karlin-Newmann G."/>
            <person name="Liu S.X."/>
            <person name="Lam B."/>
            <person name="Sakano H."/>
            <person name="Wu T."/>
            <person name="Yu G."/>
            <person name="Miranda M."/>
            <person name="Quach H.L."/>
            <person name="Tripp M."/>
            <person name="Chang C.H."/>
            <person name="Lee J.M."/>
            <person name="Toriumi M.J."/>
            <person name="Chan M.M."/>
            <person name="Tang C.C."/>
            <person name="Onodera C.S."/>
            <person name="Deng J.M."/>
            <person name="Akiyama K."/>
            <person name="Ansari Y."/>
            <person name="Arakawa T."/>
            <person name="Banh J."/>
            <person name="Banno F."/>
            <person name="Bowser L."/>
            <person name="Brooks S.Y."/>
            <person name="Carninci P."/>
            <person name="Chao Q."/>
            <person name="Choy N."/>
            <person name="Enju A."/>
            <person name="Goldsmith A.D."/>
            <person name="Gurjal M."/>
            <person name="Hansen N.F."/>
            <person name="Hayashizaki Y."/>
            <person name="Johnson-Hopson C."/>
            <person name="Hsuan V.W."/>
            <person name="Iida K."/>
            <person name="Karnes M."/>
            <person name="Khan S."/>
            <person name="Koesema E."/>
            <person name="Ishida J."/>
            <person name="Jiang P.X."/>
            <person name="Jones T."/>
            <person name="Kawai J."/>
            <person name="Kamiya A."/>
            <person name="Meyers C."/>
            <person name="Nakajima M."/>
            <person name="Narusaka M."/>
            <person name="Seki M."/>
            <person name="Sakurai T."/>
            <person name="Satou M."/>
            <person name="Tamse R."/>
            <person name="Vaysberg M."/>
            <person name="Wallender E.K."/>
            <person name="Wong C."/>
            <person name="Yamamura Y."/>
            <person name="Yuan S."/>
            <person name="Shinozaki K."/>
            <person name="Davis R.W."/>
            <person name="Theologis A."/>
            <person name="Ecker J.R."/>
        </authorList>
    </citation>
    <scope>NUCLEOTIDE SEQUENCE [LARGE SCALE MRNA]</scope>
    <source>
        <strain>cv. Columbia</strain>
    </source>
</reference>
<reference key="4">
    <citation type="journal article" date="2016" name="Science">
        <title>Photoactivation and inactivation of Arabidopsis cryptochrome 2.</title>
        <authorList>
            <person name="Wang Q."/>
            <person name="Zuo Z."/>
            <person name="Wang X."/>
            <person name="Gu L."/>
            <person name="Yoshizumi T."/>
            <person name="Yang Z."/>
            <person name="Yang L."/>
            <person name="Liu Q."/>
            <person name="Liu W."/>
            <person name="Han Y.J."/>
            <person name="Kim J.I."/>
            <person name="Liu B."/>
            <person name="Wohlschlegel J.A."/>
            <person name="Matsui M."/>
            <person name="Oka Y."/>
            <person name="Lin C."/>
        </authorList>
    </citation>
    <scope>FUNCTION</scope>
    <scope>SUBCELLULAR LOCATION</scope>
    <scope>DISRUPTION PHENOTYPE</scope>
    <scope>INTERACTION WITH CRY2</scope>
</reference>
<feature type="chain" id="PRO_0000438703" description="Protein BIC1">
    <location>
        <begin position="1"/>
        <end position="140"/>
    </location>
</feature>
<feature type="region of interest" description="Disordered" evidence="1">
    <location>
        <begin position="1"/>
        <end position="71"/>
    </location>
</feature>
<feature type="compositionally biased region" description="Polar residues" evidence="1">
    <location>
        <begin position="1"/>
        <end position="10"/>
    </location>
</feature>
<feature type="compositionally biased region" description="Basic and acidic residues" evidence="1">
    <location>
        <begin position="42"/>
        <end position="68"/>
    </location>
</feature>
<gene>
    <name evidence="3" type="primary">BIC1</name>
    <name evidence="4" type="ordered locus">At3g52740</name>
    <name evidence="5" type="ORF">F3C22.140</name>
</gene>
<comment type="function">
    <text evidence="2">Regulates the blue-light dependent dimerization of CRY2 and formation of photobodies. Interacts with photoexited CRY2 to inhibit its activity. Inhibits CRY phosphorylation.</text>
</comment>
<comment type="subunit">
    <text evidence="2">Interacts with CRY2 in both darkness and light.</text>
</comment>
<comment type="subcellular location">
    <subcellularLocation>
        <location evidence="2">Nucleus</location>
    </subcellularLocation>
</comment>
<comment type="disruption phenotype">
    <text evidence="2">No visible phenotype. Bic1 and bic2 double mutants have a blue light-hypersensitive short-hypocotyl phenotype and an increased anthocyanin accumulation when grown in continuous blue light.</text>
</comment>
<proteinExistence type="evidence at protein level"/>
<evidence type="ECO:0000256" key="1">
    <source>
        <dbReference type="SAM" id="MobiDB-lite"/>
    </source>
</evidence>
<evidence type="ECO:0000269" key="2">
    <source>
    </source>
</evidence>
<evidence type="ECO:0000303" key="3">
    <source>
    </source>
</evidence>
<evidence type="ECO:0000312" key="4">
    <source>
        <dbReference type="Araport" id="AT3G52740"/>
    </source>
</evidence>
<evidence type="ECO:0000312" key="5">
    <source>
        <dbReference type="EMBL" id="CAB89235.1"/>
    </source>
</evidence>
<organism>
    <name type="scientific">Arabidopsis thaliana</name>
    <name type="common">Mouse-ear cress</name>
    <dbReference type="NCBI Taxonomy" id="3702"/>
    <lineage>
        <taxon>Eukaryota</taxon>
        <taxon>Viridiplantae</taxon>
        <taxon>Streptophyta</taxon>
        <taxon>Embryophyta</taxon>
        <taxon>Tracheophyta</taxon>
        <taxon>Spermatophyta</taxon>
        <taxon>Magnoliopsida</taxon>
        <taxon>eudicotyledons</taxon>
        <taxon>Gunneridae</taxon>
        <taxon>Pentapetalae</taxon>
        <taxon>rosids</taxon>
        <taxon>malvids</taxon>
        <taxon>Brassicales</taxon>
        <taxon>Brassicaceae</taxon>
        <taxon>Camelineae</taxon>
        <taxon>Arabidopsis</taxon>
    </lineage>
</organism>
<protein>
    <recommendedName>
        <fullName evidence="3">Protein BIC1</fullName>
    </recommendedName>
    <alternativeName>
        <fullName evidence="3">BLUE-LIGHT INHIBITOR OF CRYPTOCHROMES 1</fullName>
    </alternativeName>
</protein>
<sequence length="140" mass="15512">MMNIDDTTSPMAHPIGPSQPPSDQTKQDPPSLPQEAASSVSADKKDLALLEEKPKQSQEEDRVDTGRERLKKHRREIAGRVWIPEIWGQEELLKDWIDCSTFDTCLVPAGISSARTALVEEARRAASASGGLHNRCLILR</sequence>
<accession>Q9LXJ1</accession>
<name>BIC1_ARATH</name>
<dbReference type="EMBL" id="AL353912">
    <property type="protein sequence ID" value="CAB89235.1"/>
    <property type="molecule type" value="Genomic_DNA"/>
</dbReference>
<dbReference type="EMBL" id="CP002686">
    <property type="protein sequence ID" value="AEE78988.1"/>
    <property type="molecule type" value="Genomic_DNA"/>
</dbReference>
<dbReference type="EMBL" id="AY052695">
    <property type="protein sequence ID" value="AAK96599.1"/>
    <property type="molecule type" value="mRNA"/>
</dbReference>
<dbReference type="EMBL" id="AF446877">
    <property type="protein sequence ID" value="AAL38610.1"/>
    <property type="molecule type" value="mRNA"/>
</dbReference>
<dbReference type="PIR" id="T49027">
    <property type="entry name" value="T49027"/>
</dbReference>
<dbReference type="RefSeq" id="NP_566972.1">
    <property type="nucleotide sequence ID" value="NM_115134.3"/>
</dbReference>
<dbReference type="SMR" id="Q9LXJ1"/>
<dbReference type="FunCoup" id="Q9LXJ1">
    <property type="interactions" value="34"/>
</dbReference>
<dbReference type="IntAct" id="Q9LXJ1">
    <property type="interactions" value="6"/>
</dbReference>
<dbReference type="STRING" id="3702.Q9LXJ1"/>
<dbReference type="PaxDb" id="3702-AT3G52740.1"/>
<dbReference type="ProteomicsDB" id="240376"/>
<dbReference type="EnsemblPlants" id="AT3G52740.1">
    <property type="protein sequence ID" value="AT3G52740.1"/>
    <property type="gene ID" value="AT3G52740"/>
</dbReference>
<dbReference type="GeneID" id="824440"/>
<dbReference type="Gramene" id="AT3G52740.1">
    <property type="protein sequence ID" value="AT3G52740.1"/>
    <property type="gene ID" value="AT3G52740"/>
</dbReference>
<dbReference type="KEGG" id="ath:AT3G52740"/>
<dbReference type="Araport" id="AT3G52740"/>
<dbReference type="TAIR" id="AT3G52740">
    <property type="gene designation" value="BIC1"/>
</dbReference>
<dbReference type="eggNOG" id="ENOG502S7HB">
    <property type="taxonomic scope" value="Eukaryota"/>
</dbReference>
<dbReference type="HOGENOM" id="CLU_128475_2_0_1"/>
<dbReference type="InParanoid" id="Q9LXJ1"/>
<dbReference type="OMA" id="MAHPIDP"/>
<dbReference type="PhylomeDB" id="Q9LXJ1"/>
<dbReference type="PRO" id="PR:Q9LXJ1"/>
<dbReference type="Proteomes" id="UP000006548">
    <property type="component" value="Chromosome 3"/>
</dbReference>
<dbReference type="ExpressionAtlas" id="Q9LXJ1">
    <property type="expression patterns" value="baseline and differential"/>
</dbReference>
<dbReference type="GO" id="GO:0005634">
    <property type="term" value="C:nucleus"/>
    <property type="evidence" value="ECO:0007669"/>
    <property type="project" value="UniProtKB-SubCell"/>
</dbReference>
<dbReference type="GO" id="GO:0009785">
    <property type="term" value="P:blue light signaling pathway"/>
    <property type="evidence" value="ECO:0007669"/>
    <property type="project" value="InterPro"/>
</dbReference>
<dbReference type="CDD" id="cd22645">
    <property type="entry name" value="BIC1_CID"/>
    <property type="match status" value="1"/>
</dbReference>
<dbReference type="InterPro" id="IPR040374">
    <property type="entry name" value="BIC"/>
</dbReference>
<dbReference type="PANTHER" id="PTHR34207">
    <property type="entry name" value="PROTEIN BIC1"/>
    <property type="match status" value="1"/>
</dbReference>
<dbReference type="PANTHER" id="PTHR34207:SF2">
    <property type="entry name" value="PROTEIN BIC1"/>
    <property type="match status" value="1"/>
</dbReference>